<protein>
    <recommendedName>
        <fullName evidence="2">Choline transporter-like 1</fullName>
    </recommendedName>
</protein>
<dbReference type="EMBL" id="CH477231">
    <property type="protein sequence ID" value="EAT46917.1"/>
    <property type="molecule type" value="Genomic_DNA"/>
</dbReference>
<dbReference type="SMR" id="Q17JQ7"/>
<dbReference type="FunCoup" id="Q17JQ7">
    <property type="interactions" value="151"/>
</dbReference>
<dbReference type="GlyCosmos" id="Q17JQ7">
    <property type="glycosylation" value="4 sites, No reported glycans"/>
</dbReference>
<dbReference type="PaxDb" id="7159-AAEL001935-PA"/>
<dbReference type="EnsemblMetazoa" id="AAEL001935-RA">
    <property type="protein sequence ID" value="AAEL001935-PA"/>
    <property type="gene ID" value="AAEL001935"/>
</dbReference>
<dbReference type="GeneID" id="5573001"/>
<dbReference type="KEGG" id="aag:5573001"/>
<dbReference type="CTD" id="110280"/>
<dbReference type="VEuPathDB" id="VectorBase:AAEL001935"/>
<dbReference type="eggNOG" id="KOG1362">
    <property type="taxonomic scope" value="Eukaryota"/>
</dbReference>
<dbReference type="HOGENOM" id="CLU_017181_2_0_1"/>
<dbReference type="InParanoid" id="Q17JQ7"/>
<dbReference type="OMA" id="GKSFCKA"/>
<dbReference type="OrthoDB" id="420519at2759"/>
<dbReference type="PhylomeDB" id="Q17JQ7"/>
<dbReference type="Proteomes" id="UP000008820">
    <property type="component" value="Chromosome 2"/>
</dbReference>
<dbReference type="Proteomes" id="UP000682892">
    <property type="component" value="Unassembled WGS sequence"/>
</dbReference>
<dbReference type="GO" id="GO:0016020">
    <property type="term" value="C:membrane"/>
    <property type="evidence" value="ECO:0007669"/>
    <property type="project" value="UniProtKB-SubCell"/>
</dbReference>
<dbReference type="GO" id="GO:0022857">
    <property type="term" value="F:transmembrane transporter activity"/>
    <property type="evidence" value="ECO:0007669"/>
    <property type="project" value="InterPro"/>
</dbReference>
<dbReference type="InterPro" id="IPR007603">
    <property type="entry name" value="Choline_transptr-like"/>
</dbReference>
<dbReference type="PANTHER" id="PTHR12385">
    <property type="entry name" value="CHOLINE TRANSPORTER-LIKE (SLC FAMILY 44)"/>
    <property type="match status" value="1"/>
</dbReference>
<dbReference type="PANTHER" id="PTHR12385:SF12">
    <property type="entry name" value="CHOLINE TRANSPORTER-LIKE PROTEIN"/>
    <property type="match status" value="1"/>
</dbReference>
<dbReference type="Pfam" id="PF04515">
    <property type="entry name" value="Choline_transpo"/>
    <property type="match status" value="1"/>
</dbReference>
<gene>
    <name evidence="2" type="primary">Ctl1</name>
    <name type="ORF">AAEL001935</name>
</gene>
<comment type="subcellular location">
    <subcellularLocation>
        <location evidence="1">Membrane</location>
        <topology evidence="1">Multi-pass membrane protein</topology>
    </subcellularLocation>
</comment>
<comment type="similarity">
    <text evidence="4">Belongs to the CTL (choline transporter-like) family.</text>
</comment>
<sequence>MGCFESKPSEQHQPTAVRGCTDIFWLVVYILFWIALLVIAVFSFVYGNPLRVINGYDSFGNTCGVSSNEKFSHFPLSGMNTKDKPYVFFLDIKELRQTLKICVKECPKKEIGNAMELYRYYEERDTKYCRYDFNMSLLTAPDASGPKYFAFAGPCPKFPVYESSSVLHRCIPSGKNAPTKVVKDMYALVNSFGAAQQVFSDIYKTWPTVLLLVGLSLIFSIILIMMLHWLTAIISWLICIFVAVASIGITAVLWWSYYKQKHSIDTDTKLSYLEELVRNETTIYVLAILATCIMIILLVVIYYLREKLSGLAALFEEAGKCMLQIPGLAGPPVLAFIALAVFLSFWMVVIVCLATANYPNVKPLLPFTQLKENPNKTEAAIKPDMSVNNNTYKSFDLVEYPEADFLRHMLWIYIIGLVWTSEFIFACQQLVISGAVAYWYFRKPTDTPVLNAIAKLVKYHLGSVAKGSFIITLFKIPRLILTYLYAKLKRHQQEGSECASCCLKCCICSFWLLEKFIRYLNHNAYTVIAIESVNFCPAAKIAWNALVTNALQVATINGIGDLVLFLGKLAVAALCGLISILMLRDNPDVHFYMAPVIIITLFSFFVAHIVLSLYEMVVDTLFLCVCEDRTINGNSGRWKQSNLAHLLGESPEQDAVEAPMQVVELTPITKQPFSVQSLQMTEIDDKGAV</sequence>
<evidence type="ECO:0000250" key="1"/>
<evidence type="ECO:0000250" key="2">
    <source>
        <dbReference type="UniProtKB" id="Q9VZE7"/>
    </source>
</evidence>
<evidence type="ECO:0000255" key="3"/>
<evidence type="ECO:0000305" key="4"/>
<name>CTL1L_AEDAE</name>
<accession>Q17JQ7</accession>
<feature type="chain" id="PRO_0000359729" description="Choline transporter-like 1">
    <location>
        <begin position="1"/>
        <end position="689"/>
    </location>
</feature>
<feature type="transmembrane region" description="Helical" evidence="3">
    <location>
        <begin position="23"/>
        <end position="43"/>
    </location>
</feature>
<feature type="transmembrane region" description="Helical" evidence="3">
    <location>
        <begin position="199"/>
        <end position="219"/>
    </location>
</feature>
<feature type="transmembrane region" description="Helical" evidence="3">
    <location>
        <begin position="233"/>
        <end position="255"/>
    </location>
</feature>
<feature type="transmembrane region" description="Helical" evidence="3">
    <location>
        <begin position="283"/>
        <end position="303"/>
    </location>
</feature>
<feature type="transmembrane region" description="Helical" evidence="3">
    <location>
        <begin position="333"/>
        <end position="353"/>
    </location>
</feature>
<feature type="transmembrane region" description="Helical" evidence="3">
    <location>
        <begin position="412"/>
        <end position="432"/>
    </location>
</feature>
<feature type="transmembrane region" description="Helical" evidence="3">
    <location>
        <begin position="461"/>
        <end position="481"/>
    </location>
</feature>
<feature type="transmembrane region" description="Helical" evidence="3">
    <location>
        <begin position="562"/>
        <end position="582"/>
    </location>
</feature>
<feature type="transmembrane region" description="Helical" evidence="3">
    <location>
        <begin position="591"/>
        <end position="611"/>
    </location>
</feature>
<feature type="glycosylation site" description="N-linked (GlcNAc...) asparagine" evidence="3">
    <location>
        <position position="134"/>
    </location>
</feature>
<feature type="glycosylation site" description="N-linked (GlcNAc...) asparagine" evidence="3">
    <location>
        <position position="279"/>
    </location>
</feature>
<feature type="glycosylation site" description="N-linked (GlcNAc...) asparagine" evidence="3">
    <location>
        <position position="375"/>
    </location>
</feature>
<feature type="glycosylation site" description="N-linked (GlcNAc...) asparagine" evidence="3">
    <location>
        <position position="389"/>
    </location>
</feature>
<keyword id="KW-0325">Glycoprotein</keyword>
<keyword id="KW-0472">Membrane</keyword>
<keyword id="KW-1185">Reference proteome</keyword>
<keyword id="KW-0812">Transmembrane</keyword>
<keyword id="KW-1133">Transmembrane helix</keyword>
<reference key="1">
    <citation type="journal article" date="2007" name="Science">
        <title>Genome sequence of Aedes aegypti, a major arbovirus vector.</title>
        <authorList>
            <person name="Nene V."/>
            <person name="Wortman J.R."/>
            <person name="Lawson D."/>
            <person name="Haas B.J."/>
            <person name="Kodira C.D."/>
            <person name="Tu Z.J."/>
            <person name="Loftus B.J."/>
            <person name="Xi Z."/>
            <person name="Megy K."/>
            <person name="Grabherr M."/>
            <person name="Ren Q."/>
            <person name="Zdobnov E.M."/>
            <person name="Lobo N.F."/>
            <person name="Campbell K.S."/>
            <person name="Brown S.E."/>
            <person name="Bonaldo M.F."/>
            <person name="Zhu J."/>
            <person name="Sinkins S.P."/>
            <person name="Hogenkamp D.G."/>
            <person name="Amedeo P."/>
            <person name="Arensburger P."/>
            <person name="Atkinson P.W."/>
            <person name="Bidwell S.L."/>
            <person name="Biedler J."/>
            <person name="Birney E."/>
            <person name="Bruggner R.V."/>
            <person name="Costas J."/>
            <person name="Coy M.R."/>
            <person name="Crabtree J."/>
            <person name="Crawford M."/>
            <person name="DeBruyn B."/>
            <person name="DeCaprio D."/>
            <person name="Eiglmeier K."/>
            <person name="Eisenstadt E."/>
            <person name="El-Dorry H."/>
            <person name="Gelbart W.M."/>
            <person name="Gomes S.L."/>
            <person name="Hammond M."/>
            <person name="Hannick L.I."/>
            <person name="Hogan J.R."/>
            <person name="Holmes M.H."/>
            <person name="Jaffe D."/>
            <person name="Johnston S.J."/>
            <person name="Kennedy R.C."/>
            <person name="Koo H."/>
            <person name="Kravitz S."/>
            <person name="Kriventseva E.V."/>
            <person name="Kulp D."/>
            <person name="Labutti K."/>
            <person name="Lee E."/>
            <person name="Li S."/>
            <person name="Lovin D.D."/>
            <person name="Mao C."/>
            <person name="Mauceli E."/>
            <person name="Menck C.F."/>
            <person name="Miller J.R."/>
            <person name="Montgomery P."/>
            <person name="Mori A."/>
            <person name="Nascimento A.L."/>
            <person name="Naveira H.F."/>
            <person name="Nusbaum C."/>
            <person name="O'Leary S.B."/>
            <person name="Orvis J."/>
            <person name="Pertea M."/>
            <person name="Quesneville H."/>
            <person name="Reidenbach K.R."/>
            <person name="Rogers Y.-H.C."/>
            <person name="Roth C.W."/>
            <person name="Schneider J.R."/>
            <person name="Schatz M."/>
            <person name="Shumway M."/>
            <person name="Stanke M."/>
            <person name="Stinson E.O."/>
            <person name="Tubio J.M.C."/>
            <person name="Vanzee J.P."/>
            <person name="Verjovski-Almeida S."/>
            <person name="Werner D."/>
            <person name="White O.R."/>
            <person name="Wyder S."/>
            <person name="Zeng Q."/>
            <person name="Zhao Q."/>
            <person name="Zhao Y."/>
            <person name="Hill C.A."/>
            <person name="Raikhel A.S."/>
            <person name="Soares M.B."/>
            <person name="Knudson D.L."/>
            <person name="Lee N.H."/>
            <person name="Galagan J."/>
            <person name="Salzberg S.L."/>
            <person name="Paulsen I.T."/>
            <person name="Dimopoulos G."/>
            <person name="Collins F.H."/>
            <person name="Bruce B."/>
            <person name="Fraser-Liggett C.M."/>
            <person name="Severson D.W."/>
        </authorList>
    </citation>
    <scope>NUCLEOTIDE SEQUENCE [LARGE SCALE GENOMIC DNA]</scope>
    <source>
        <strain>LVPib12</strain>
    </source>
</reference>
<organism>
    <name type="scientific">Aedes aegypti</name>
    <name type="common">Yellowfever mosquito</name>
    <name type="synonym">Culex aegypti</name>
    <dbReference type="NCBI Taxonomy" id="7159"/>
    <lineage>
        <taxon>Eukaryota</taxon>
        <taxon>Metazoa</taxon>
        <taxon>Ecdysozoa</taxon>
        <taxon>Arthropoda</taxon>
        <taxon>Hexapoda</taxon>
        <taxon>Insecta</taxon>
        <taxon>Pterygota</taxon>
        <taxon>Neoptera</taxon>
        <taxon>Endopterygota</taxon>
        <taxon>Diptera</taxon>
        <taxon>Nematocera</taxon>
        <taxon>Culicoidea</taxon>
        <taxon>Culicidae</taxon>
        <taxon>Culicinae</taxon>
        <taxon>Aedini</taxon>
        <taxon>Aedes</taxon>
        <taxon>Stegomyia</taxon>
    </lineage>
</organism>
<proteinExistence type="inferred from homology"/>